<accession>Q8PXJ1</accession>
<comment type="function">
    <text evidence="1">Allows the formation of correctly charged Gln-tRNA(Gln) through the transamidation of misacylated Glu-tRNA(Gln) in organisms which lack glutaminyl-tRNA synthetase. The reaction takes place in the presence of glutamine and ATP through an activated gamma-phospho-Glu-tRNA(Gln).</text>
</comment>
<comment type="catalytic activity">
    <reaction evidence="1">
        <text>L-glutamyl-tRNA(Gln) + L-glutamine + ATP + H2O = L-glutaminyl-tRNA(Gln) + L-glutamate + ADP + phosphate + H(+)</text>
        <dbReference type="Rhea" id="RHEA:17521"/>
        <dbReference type="Rhea" id="RHEA-COMP:9681"/>
        <dbReference type="Rhea" id="RHEA-COMP:9684"/>
        <dbReference type="ChEBI" id="CHEBI:15377"/>
        <dbReference type="ChEBI" id="CHEBI:15378"/>
        <dbReference type="ChEBI" id="CHEBI:29985"/>
        <dbReference type="ChEBI" id="CHEBI:30616"/>
        <dbReference type="ChEBI" id="CHEBI:43474"/>
        <dbReference type="ChEBI" id="CHEBI:58359"/>
        <dbReference type="ChEBI" id="CHEBI:78520"/>
        <dbReference type="ChEBI" id="CHEBI:78521"/>
        <dbReference type="ChEBI" id="CHEBI:456216"/>
        <dbReference type="EC" id="6.3.5.7"/>
    </reaction>
</comment>
<comment type="subunit">
    <text evidence="1">Heterotrimer of A, B and C subunits.</text>
</comment>
<comment type="similarity">
    <text evidence="1">Belongs to the amidase family. GatA subfamily.</text>
</comment>
<gene>
    <name evidence="1" type="primary">gatA</name>
    <name type="ordered locus">MM_1227</name>
</gene>
<reference key="1">
    <citation type="journal article" date="2002" name="J. Mol. Microbiol. Biotechnol.">
        <title>The genome of Methanosarcina mazei: evidence for lateral gene transfer between Bacteria and Archaea.</title>
        <authorList>
            <person name="Deppenmeier U."/>
            <person name="Johann A."/>
            <person name="Hartsch T."/>
            <person name="Merkl R."/>
            <person name="Schmitz R.A."/>
            <person name="Martinez-Arias R."/>
            <person name="Henne A."/>
            <person name="Wiezer A."/>
            <person name="Baeumer S."/>
            <person name="Jacobi C."/>
            <person name="Brueggemann H."/>
            <person name="Lienard T."/>
            <person name="Christmann A."/>
            <person name="Boemecke M."/>
            <person name="Steckel S."/>
            <person name="Bhattacharyya A."/>
            <person name="Lykidis A."/>
            <person name="Overbeek R."/>
            <person name="Klenk H.-P."/>
            <person name="Gunsalus R.P."/>
            <person name="Fritz H.-J."/>
            <person name="Gottschalk G."/>
        </authorList>
    </citation>
    <scope>NUCLEOTIDE SEQUENCE [LARGE SCALE GENOMIC DNA]</scope>
    <source>
        <strain>ATCC BAA-159 / DSM 3647 / Goe1 / Go1 / JCM 11833 / OCM 88</strain>
    </source>
</reference>
<protein>
    <recommendedName>
        <fullName evidence="1">Glutamyl-tRNA(Gln) amidotransferase subunit A</fullName>
        <shortName evidence="1">Glu-ADT subunit A</shortName>
        <ecNumber evidence="1">6.3.5.7</ecNumber>
    </recommendedName>
</protein>
<proteinExistence type="inferred from homology"/>
<name>GATA_METMA</name>
<evidence type="ECO:0000255" key="1">
    <source>
        <dbReference type="HAMAP-Rule" id="MF_00120"/>
    </source>
</evidence>
<sequence>MMAKWMSVAQVKEKIKESSAEEVTSRYLEVIKKSKINGYLTISDKALEQAKKIDKEGHEGPLAGVPIAIKDNISVVGLPNSCGSKILEGYVPPFNAHVIEKLLSAGAVILGKTNMDEFAMGSSTETSHFGPTANPWDLERVPGGSSGGSAAVVAAGEAPFALGSDTGGSVRCPASFCGVVGLKPTYGAVSRYGVVAYANSLEQVGPLANNVEDIAVLMDVIAGYDRRDSTSIDSKTEYQKALVDDVKGLKIGVPKEFFGEGIHPDVEKAVWDAIHKCESLGATWEEVSMPHIKYALASYYIIAMSEASSNLARFDGTRYGFRAGGENWHAMVSKTRAEGFGTEVKRRILLGTYALSAGYHDKYYLKALKVRTLVKQDFDKALSKVDLLMAPTMPNPAFKIGEKIEDPLTLYLSDINTCPINLAGVPSISVPCGFTDGLPIGLQIMGKPFDEETVLRAAYTFEKNTDYHTKRPPEVA</sequence>
<feature type="chain" id="PRO_0000105234" description="Glutamyl-tRNA(Gln) amidotransferase subunit A">
    <location>
        <begin position="1"/>
        <end position="476"/>
    </location>
</feature>
<feature type="active site" description="Charge relay system" evidence="1">
    <location>
        <position position="70"/>
    </location>
</feature>
<feature type="active site" description="Charge relay system" evidence="1">
    <location>
        <position position="145"/>
    </location>
</feature>
<feature type="active site" description="Acyl-ester intermediate" evidence="1">
    <location>
        <position position="169"/>
    </location>
</feature>
<keyword id="KW-0067">ATP-binding</keyword>
<keyword id="KW-0436">Ligase</keyword>
<keyword id="KW-0547">Nucleotide-binding</keyword>
<keyword id="KW-0648">Protein biosynthesis</keyword>
<dbReference type="EC" id="6.3.5.7" evidence="1"/>
<dbReference type="EMBL" id="AE008384">
    <property type="protein sequence ID" value="AAM30923.1"/>
    <property type="molecule type" value="Genomic_DNA"/>
</dbReference>
<dbReference type="SMR" id="Q8PXJ1"/>
<dbReference type="KEGG" id="mma:MM_1227"/>
<dbReference type="PATRIC" id="fig|192952.21.peg.1432"/>
<dbReference type="eggNOG" id="arCOG01717">
    <property type="taxonomic scope" value="Archaea"/>
</dbReference>
<dbReference type="HOGENOM" id="CLU_009600_0_3_2"/>
<dbReference type="Proteomes" id="UP000000595">
    <property type="component" value="Chromosome"/>
</dbReference>
<dbReference type="GO" id="GO:0030956">
    <property type="term" value="C:glutamyl-tRNA(Gln) amidotransferase complex"/>
    <property type="evidence" value="ECO:0007669"/>
    <property type="project" value="InterPro"/>
</dbReference>
<dbReference type="GO" id="GO:0005524">
    <property type="term" value="F:ATP binding"/>
    <property type="evidence" value="ECO:0007669"/>
    <property type="project" value="UniProtKB-KW"/>
</dbReference>
<dbReference type="GO" id="GO:0050567">
    <property type="term" value="F:glutaminyl-tRNA synthase (glutamine-hydrolyzing) activity"/>
    <property type="evidence" value="ECO:0007669"/>
    <property type="project" value="UniProtKB-UniRule"/>
</dbReference>
<dbReference type="GO" id="GO:0006412">
    <property type="term" value="P:translation"/>
    <property type="evidence" value="ECO:0007669"/>
    <property type="project" value="UniProtKB-UniRule"/>
</dbReference>
<dbReference type="Gene3D" id="3.90.1300.10">
    <property type="entry name" value="Amidase signature (AS) domain"/>
    <property type="match status" value="1"/>
</dbReference>
<dbReference type="HAMAP" id="MF_00120">
    <property type="entry name" value="GatA"/>
    <property type="match status" value="1"/>
</dbReference>
<dbReference type="InterPro" id="IPR000120">
    <property type="entry name" value="Amidase"/>
</dbReference>
<dbReference type="InterPro" id="IPR020556">
    <property type="entry name" value="Amidase_CS"/>
</dbReference>
<dbReference type="InterPro" id="IPR023631">
    <property type="entry name" value="Amidase_dom"/>
</dbReference>
<dbReference type="InterPro" id="IPR036928">
    <property type="entry name" value="AS_sf"/>
</dbReference>
<dbReference type="InterPro" id="IPR004412">
    <property type="entry name" value="GatA"/>
</dbReference>
<dbReference type="NCBIfam" id="TIGR00132">
    <property type="entry name" value="gatA"/>
    <property type="match status" value="1"/>
</dbReference>
<dbReference type="PANTHER" id="PTHR11895:SF7">
    <property type="entry name" value="GLUTAMYL-TRNA(GLN) AMIDOTRANSFERASE SUBUNIT A, MITOCHONDRIAL"/>
    <property type="match status" value="1"/>
</dbReference>
<dbReference type="PANTHER" id="PTHR11895">
    <property type="entry name" value="TRANSAMIDASE"/>
    <property type="match status" value="1"/>
</dbReference>
<dbReference type="Pfam" id="PF01425">
    <property type="entry name" value="Amidase"/>
    <property type="match status" value="1"/>
</dbReference>
<dbReference type="SUPFAM" id="SSF75304">
    <property type="entry name" value="Amidase signature (AS) enzymes"/>
    <property type="match status" value="1"/>
</dbReference>
<dbReference type="PROSITE" id="PS00571">
    <property type="entry name" value="AMIDASES"/>
    <property type="match status" value="1"/>
</dbReference>
<organism>
    <name type="scientific">Methanosarcina mazei (strain ATCC BAA-159 / DSM 3647 / Goe1 / Go1 / JCM 11833 / OCM 88)</name>
    <name type="common">Methanosarcina frisia</name>
    <dbReference type="NCBI Taxonomy" id="192952"/>
    <lineage>
        <taxon>Archaea</taxon>
        <taxon>Methanobacteriati</taxon>
        <taxon>Methanobacteriota</taxon>
        <taxon>Stenosarchaea group</taxon>
        <taxon>Methanomicrobia</taxon>
        <taxon>Methanosarcinales</taxon>
        <taxon>Methanosarcinaceae</taxon>
        <taxon>Methanosarcina</taxon>
    </lineage>
</organism>